<protein>
    <recommendedName>
        <fullName>Odorant receptor 23a</fullName>
    </recommendedName>
</protein>
<proteinExistence type="evidence at transcript level"/>
<keyword id="KW-1003">Cell membrane</keyword>
<keyword id="KW-0325">Glycoprotein</keyword>
<keyword id="KW-0472">Membrane</keyword>
<keyword id="KW-0552">Olfaction</keyword>
<keyword id="KW-0675">Receptor</keyword>
<keyword id="KW-1185">Reference proteome</keyword>
<keyword id="KW-0716">Sensory transduction</keyword>
<keyword id="KW-0807">Transducer</keyword>
<keyword id="KW-0812">Transmembrane</keyword>
<keyword id="KW-1133">Transmembrane helix</keyword>
<organism>
    <name type="scientific">Drosophila melanogaster</name>
    <name type="common">Fruit fly</name>
    <dbReference type="NCBI Taxonomy" id="7227"/>
    <lineage>
        <taxon>Eukaryota</taxon>
        <taxon>Metazoa</taxon>
        <taxon>Ecdysozoa</taxon>
        <taxon>Arthropoda</taxon>
        <taxon>Hexapoda</taxon>
        <taxon>Insecta</taxon>
        <taxon>Pterygota</taxon>
        <taxon>Neoptera</taxon>
        <taxon>Endopterygota</taxon>
        <taxon>Diptera</taxon>
        <taxon>Brachycera</taxon>
        <taxon>Muscomorpha</taxon>
        <taxon>Ephydroidea</taxon>
        <taxon>Drosophilidae</taxon>
        <taxon>Drosophila</taxon>
        <taxon>Sophophora</taxon>
    </lineage>
</organism>
<comment type="function">
    <text evidence="7">Odorant receptor which mediates acceptance or avoidance behavior, depending on its substrates. The odorant receptor repertoire encodes a large collection of odor stimuli that vary widely in identity, intensity, and duration. May form a complex with Orco to form odorant-sensing units, providing sensitive and prolonged odorant signaling and calcium permeability.</text>
</comment>
<comment type="subunit">
    <text evidence="1">Interacts with Orco. Complexes exist early in the endomembrane system in olfactory sensory neurons (OSNs), coupling these complexes to the conserved ciliary trafficking pathway (By similarity).</text>
</comment>
<comment type="subcellular location">
    <subcellularLocation>
        <location evidence="1">Cell membrane</location>
        <topology evidence="1">Multi-pass membrane protein</topology>
    </subcellularLocation>
</comment>
<comment type="tissue specificity">
    <text evidence="3 4 5 6">Expressed in 10-40 sensory cells in the third antenna segment and in the maxillary palp.</text>
</comment>
<comment type="miscellaneous">
    <text>The atypical heteromeric and topological design of the odorant receptors appears to be an insect-specific solution for odor recognition, making the OR/Orco complex an attractive target for the development of highly selective insect repellents to disrupt olfactory-mediated host-seeking behaviors of insect disease vectors. Odor-evoked OR currents are independent of known G-protein-coupled second messenger pathways.</text>
</comment>
<comment type="similarity">
    <text evidence="8">Belongs to the insect chemoreceptor superfamily. Heteromeric odorant receptor channel (TC 1.A.69) family. Or2a subfamily.</text>
</comment>
<reference key="1">
    <citation type="journal article" date="1999" name="Cell">
        <title>A spatial map of olfactory receptor expression in the Drosophila antenna.</title>
        <authorList>
            <person name="Vosshall L.B."/>
            <person name="Amrein H."/>
            <person name="Morozov P.S."/>
            <person name="Rzhetsky A."/>
            <person name="Axel R."/>
        </authorList>
    </citation>
    <scope>NUCLEOTIDE SEQUENCE [MRNA]</scope>
    <scope>TISSUE SPECIFICITY</scope>
    <source>
        <strain>Oregon-R</strain>
        <tissue>Antenna</tissue>
    </source>
</reference>
<reference key="2">
    <citation type="journal article" date="1999" name="Genomics">
        <title>Identification of candidate Drosophila olfactory receptors from genomic DNA sequence.</title>
        <authorList>
            <person name="Gao Q."/>
            <person name="Chess A."/>
        </authorList>
    </citation>
    <scope>NUCLEOTIDE SEQUENCE [GENOMIC DNA]</scope>
    <scope>TISSUE SPECIFICITY</scope>
</reference>
<reference key="3">
    <citation type="journal article" date="2000" name="Science">
        <title>The genome sequence of Drosophila melanogaster.</title>
        <authorList>
            <person name="Adams M.D."/>
            <person name="Celniker S.E."/>
            <person name="Holt R.A."/>
            <person name="Evans C.A."/>
            <person name="Gocayne J.D."/>
            <person name="Amanatides P.G."/>
            <person name="Scherer S.E."/>
            <person name="Li P.W."/>
            <person name="Hoskins R.A."/>
            <person name="Galle R.F."/>
            <person name="George R.A."/>
            <person name="Lewis S.E."/>
            <person name="Richards S."/>
            <person name="Ashburner M."/>
            <person name="Henderson S.N."/>
            <person name="Sutton G.G."/>
            <person name="Wortman J.R."/>
            <person name="Yandell M.D."/>
            <person name="Zhang Q."/>
            <person name="Chen L.X."/>
            <person name="Brandon R.C."/>
            <person name="Rogers Y.-H.C."/>
            <person name="Blazej R.G."/>
            <person name="Champe M."/>
            <person name="Pfeiffer B.D."/>
            <person name="Wan K.H."/>
            <person name="Doyle C."/>
            <person name="Baxter E.G."/>
            <person name="Helt G."/>
            <person name="Nelson C.R."/>
            <person name="Miklos G.L.G."/>
            <person name="Abril J.F."/>
            <person name="Agbayani A."/>
            <person name="An H.-J."/>
            <person name="Andrews-Pfannkoch C."/>
            <person name="Baldwin D."/>
            <person name="Ballew R.M."/>
            <person name="Basu A."/>
            <person name="Baxendale J."/>
            <person name="Bayraktaroglu L."/>
            <person name="Beasley E.M."/>
            <person name="Beeson K.Y."/>
            <person name="Benos P.V."/>
            <person name="Berman B.P."/>
            <person name="Bhandari D."/>
            <person name="Bolshakov S."/>
            <person name="Borkova D."/>
            <person name="Botchan M.R."/>
            <person name="Bouck J."/>
            <person name="Brokstein P."/>
            <person name="Brottier P."/>
            <person name="Burtis K.C."/>
            <person name="Busam D.A."/>
            <person name="Butler H."/>
            <person name="Cadieu E."/>
            <person name="Center A."/>
            <person name="Chandra I."/>
            <person name="Cherry J.M."/>
            <person name="Cawley S."/>
            <person name="Dahlke C."/>
            <person name="Davenport L.B."/>
            <person name="Davies P."/>
            <person name="de Pablos B."/>
            <person name="Delcher A."/>
            <person name="Deng Z."/>
            <person name="Mays A.D."/>
            <person name="Dew I."/>
            <person name="Dietz S.M."/>
            <person name="Dodson K."/>
            <person name="Doup L.E."/>
            <person name="Downes M."/>
            <person name="Dugan-Rocha S."/>
            <person name="Dunkov B.C."/>
            <person name="Dunn P."/>
            <person name="Durbin K.J."/>
            <person name="Evangelista C.C."/>
            <person name="Ferraz C."/>
            <person name="Ferriera S."/>
            <person name="Fleischmann W."/>
            <person name="Fosler C."/>
            <person name="Gabrielian A.E."/>
            <person name="Garg N.S."/>
            <person name="Gelbart W.M."/>
            <person name="Glasser K."/>
            <person name="Glodek A."/>
            <person name="Gong F."/>
            <person name="Gorrell J.H."/>
            <person name="Gu Z."/>
            <person name="Guan P."/>
            <person name="Harris M."/>
            <person name="Harris N.L."/>
            <person name="Harvey D.A."/>
            <person name="Heiman T.J."/>
            <person name="Hernandez J.R."/>
            <person name="Houck J."/>
            <person name="Hostin D."/>
            <person name="Houston K.A."/>
            <person name="Howland T.J."/>
            <person name="Wei M.-H."/>
            <person name="Ibegwam C."/>
            <person name="Jalali M."/>
            <person name="Kalush F."/>
            <person name="Karpen G.H."/>
            <person name="Ke Z."/>
            <person name="Kennison J.A."/>
            <person name="Ketchum K.A."/>
            <person name="Kimmel B.E."/>
            <person name="Kodira C.D."/>
            <person name="Kraft C.L."/>
            <person name="Kravitz S."/>
            <person name="Kulp D."/>
            <person name="Lai Z."/>
            <person name="Lasko P."/>
            <person name="Lei Y."/>
            <person name="Levitsky A.A."/>
            <person name="Li J.H."/>
            <person name="Li Z."/>
            <person name="Liang Y."/>
            <person name="Lin X."/>
            <person name="Liu X."/>
            <person name="Mattei B."/>
            <person name="McIntosh T.C."/>
            <person name="McLeod M.P."/>
            <person name="McPherson D."/>
            <person name="Merkulov G."/>
            <person name="Milshina N.V."/>
            <person name="Mobarry C."/>
            <person name="Morris J."/>
            <person name="Moshrefi A."/>
            <person name="Mount S.M."/>
            <person name="Moy M."/>
            <person name="Murphy B."/>
            <person name="Murphy L."/>
            <person name="Muzny D.M."/>
            <person name="Nelson D.L."/>
            <person name="Nelson D.R."/>
            <person name="Nelson K.A."/>
            <person name="Nixon K."/>
            <person name="Nusskern D.R."/>
            <person name="Pacleb J.M."/>
            <person name="Palazzolo M."/>
            <person name="Pittman G.S."/>
            <person name="Pan S."/>
            <person name="Pollard J."/>
            <person name="Puri V."/>
            <person name="Reese M.G."/>
            <person name="Reinert K."/>
            <person name="Remington K."/>
            <person name="Saunders R.D.C."/>
            <person name="Scheeler F."/>
            <person name="Shen H."/>
            <person name="Shue B.C."/>
            <person name="Siden-Kiamos I."/>
            <person name="Simpson M."/>
            <person name="Skupski M.P."/>
            <person name="Smith T.J."/>
            <person name="Spier E."/>
            <person name="Spradling A.C."/>
            <person name="Stapleton M."/>
            <person name="Strong R."/>
            <person name="Sun E."/>
            <person name="Svirskas R."/>
            <person name="Tector C."/>
            <person name="Turner R."/>
            <person name="Venter E."/>
            <person name="Wang A.H."/>
            <person name="Wang X."/>
            <person name="Wang Z.-Y."/>
            <person name="Wassarman D.A."/>
            <person name="Weinstock G.M."/>
            <person name="Weissenbach J."/>
            <person name="Williams S.M."/>
            <person name="Woodage T."/>
            <person name="Worley K.C."/>
            <person name="Wu D."/>
            <person name="Yang S."/>
            <person name="Yao Q.A."/>
            <person name="Ye J."/>
            <person name="Yeh R.-F."/>
            <person name="Zaveri J.S."/>
            <person name="Zhan M."/>
            <person name="Zhang G."/>
            <person name="Zhao Q."/>
            <person name="Zheng L."/>
            <person name="Zheng X.H."/>
            <person name="Zhong F.N."/>
            <person name="Zhong W."/>
            <person name="Zhou X."/>
            <person name="Zhu S.C."/>
            <person name="Zhu X."/>
            <person name="Smith H.O."/>
            <person name="Gibbs R.A."/>
            <person name="Myers E.W."/>
            <person name="Rubin G.M."/>
            <person name="Venter J.C."/>
        </authorList>
    </citation>
    <scope>NUCLEOTIDE SEQUENCE [LARGE SCALE GENOMIC DNA]</scope>
    <source>
        <strain>Berkeley</strain>
    </source>
</reference>
<reference key="4">
    <citation type="journal article" date="2002" name="Genome Biol.">
        <title>Annotation of the Drosophila melanogaster euchromatic genome: a systematic review.</title>
        <authorList>
            <person name="Misra S."/>
            <person name="Crosby M.A."/>
            <person name="Mungall C.J."/>
            <person name="Matthews B.B."/>
            <person name="Campbell K.S."/>
            <person name="Hradecky P."/>
            <person name="Huang Y."/>
            <person name="Kaminker J.S."/>
            <person name="Millburn G.H."/>
            <person name="Prochnik S.E."/>
            <person name="Smith C.D."/>
            <person name="Tupy J.L."/>
            <person name="Whitfield E.J."/>
            <person name="Bayraktaroglu L."/>
            <person name="Berman B.P."/>
            <person name="Bettencourt B.R."/>
            <person name="Celniker S.E."/>
            <person name="de Grey A.D.N.J."/>
            <person name="Drysdale R.A."/>
            <person name="Harris N.L."/>
            <person name="Richter J."/>
            <person name="Russo S."/>
            <person name="Schroeder A.J."/>
            <person name="Shu S.Q."/>
            <person name="Stapleton M."/>
            <person name="Yamada C."/>
            <person name="Ashburner M."/>
            <person name="Gelbart W.M."/>
            <person name="Rubin G.M."/>
            <person name="Lewis S.E."/>
        </authorList>
    </citation>
    <scope>GENOME REANNOTATION</scope>
    <source>
        <strain>Berkeley</strain>
    </source>
</reference>
<reference key="5">
    <citation type="journal article" date="1999" name="Neuron">
        <title>A novel family of divergent seven-transmembrane proteins: candidate odorant receptors in Drosophila.</title>
        <authorList>
            <person name="Clyne P.J."/>
            <person name="Warr C.G."/>
            <person name="Freeman M.R."/>
            <person name="Lessing D."/>
            <person name="Kim J."/>
            <person name="Carlson J.R."/>
        </authorList>
    </citation>
    <scope>IDENTIFICATION</scope>
    <scope>TISSUE SPECIFICITY</scope>
</reference>
<reference key="6">
    <citation type="journal article" date="2000" name="Cell">
        <title>An olfactory sensory map in the fly brain.</title>
        <authorList>
            <person name="Vosshall L.B."/>
            <person name="Wong A.M."/>
            <person name="Axel R."/>
        </authorList>
    </citation>
    <scope>TISSUE SPECIFICITY</scope>
</reference>
<reference key="7">
    <citation type="journal article" date="2006" name="Cell">
        <title>Coding of odors by a receptor repertoire.</title>
        <authorList>
            <person name="Hallem E.A."/>
            <person name="Carlson J.R."/>
        </authorList>
    </citation>
    <scope>FUNCTION</scope>
</reference>
<gene>
    <name type="primary">Or23a</name>
    <name type="synonym">AN5</name>
    <name type="synonym">DOR23A.1</name>
    <name type="synonym">dor64</name>
    <name type="synonym">Or23A.1</name>
    <name type="ORF">CG9880</name>
</gene>
<name>OR23A_DROME</name>
<accession>P81912</accession>
<sequence>MKLSETLKIDYFRVQLNAWRICGALDLSEGRYWSWSMLLCILVYLPTPMLLRGVYSFEDPVENNFSLSLTVTSLSNLMKFCMYVAQLTKMVEVQSLIGQLDARVSGESQSERHRNMTEHLLRMSKLFQITYAVVFIIAAVPFVFETELSLPMPMWFPFDWKNSMVAYIGALVFQEIGYVFQIMQCFAADSFPPLVLYLISEQCQLLILRISEIGYGYKTLEENEQDLVNCIRDQNALYRLLDVTKSLVSYPMMVQFMVIGINIAITLFVLIFYVETLYDRIYYLCFLLGITVQTYPLCYYGTMVQESFAELHYAVFCSNWVDQSASYRGHMLILAERTKRMQLLLAGNLVPIHLSTYVACWKGAYSFFTLMADRDGLGS</sequence>
<feature type="chain" id="PRO_0000174235" description="Odorant receptor 23a">
    <location>
        <begin position="1"/>
        <end position="379"/>
    </location>
</feature>
<feature type="topological domain" description="Cytoplasmic" evidence="2">
    <location>
        <begin position="1"/>
        <end position="36"/>
    </location>
</feature>
<feature type="transmembrane region" description="Helical; Name=1" evidence="2">
    <location>
        <begin position="37"/>
        <end position="57"/>
    </location>
</feature>
<feature type="topological domain" description="Extracellular" evidence="2">
    <location>
        <begin position="58"/>
        <end position="64"/>
    </location>
</feature>
<feature type="transmembrane region" description="Helical; Name=2" evidence="2">
    <location>
        <begin position="65"/>
        <end position="85"/>
    </location>
</feature>
<feature type="topological domain" description="Cytoplasmic" evidence="2">
    <location>
        <begin position="86"/>
        <end position="125"/>
    </location>
</feature>
<feature type="transmembrane region" description="Helical; Name=3" evidence="2">
    <location>
        <begin position="126"/>
        <end position="146"/>
    </location>
</feature>
<feature type="topological domain" description="Extracellular" evidence="2">
    <location>
        <begin position="147"/>
        <end position="162"/>
    </location>
</feature>
<feature type="transmembrane region" description="Helical; Name=4" evidence="2">
    <location>
        <begin position="163"/>
        <end position="183"/>
    </location>
</feature>
<feature type="topological domain" description="Cytoplasmic" evidence="2">
    <location>
        <begin position="184"/>
        <end position="253"/>
    </location>
</feature>
<feature type="transmembrane region" description="Helical; Name=5" evidence="2">
    <location>
        <begin position="254"/>
        <end position="274"/>
    </location>
</feature>
<feature type="topological domain" description="Extracellular" evidence="2">
    <location>
        <begin position="275"/>
        <end position="280"/>
    </location>
</feature>
<feature type="transmembrane region" description="Helical; Name=6" evidence="2">
    <location>
        <begin position="281"/>
        <end position="301"/>
    </location>
</feature>
<feature type="topological domain" description="Cytoplasmic" evidence="2">
    <location>
        <begin position="302"/>
        <end position="340"/>
    </location>
</feature>
<feature type="transmembrane region" description="Helical; Name=7" evidence="2">
    <location>
        <begin position="341"/>
        <end position="361"/>
    </location>
</feature>
<feature type="topological domain" description="Extracellular" evidence="2">
    <location>
        <begin position="362"/>
        <end position="379"/>
    </location>
</feature>
<feature type="glycosylation site" description="N-linked (GlcNAc...) asparagine" evidence="2">
    <location>
        <position position="64"/>
    </location>
</feature>
<dbReference type="EMBL" id="AF127925">
    <property type="protein sequence ID" value="AAD26360.1"/>
    <property type="molecule type" value="mRNA"/>
</dbReference>
<dbReference type="EMBL" id="AE014134">
    <property type="protein sequence ID" value="AAF51230.3"/>
    <property type="molecule type" value="Genomic_DNA"/>
</dbReference>
<dbReference type="RefSeq" id="NP_523458.3">
    <property type="nucleotide sequence ID" value="NM_078734.4"/>
</dbReference>
<dbReference type="SMR" id="P81912"/>
<dbReference type="FunCoup" id="P81912">
    <property type="interactions" value="22"/>
</dbReference>
<dbReference type="STRING" id="7227.FBpp0077382"/>
<dbReference type="GlyCosmos" id="P81912">
    <property type="glycosylation" value="1 site, No reported glycans"/>
</dbReference>
<dbReference type="GlyGen" id="P81912">
    <property type="glycosylation" value="1 site"/>
</dbReference>
<dbReference type="PaxDb" id="7227-FBpp0077382"/>
<dbReference type="EnsemblMetazoa" id="FBtr0077698">
    <property type="protein sequence ID" value="FBpp0077382"/>
    <property type="gene ID" value="FBgn0026395"/>
</dbReference>
<dbReference type="GeneID" id="33450"/>
<dbReference type="KEGG" id="dme:Dmel_CG9880"/>
<dbReference type="AGR" id="FB:FBgn0026395"/>
<dbReference type="CTD" id="33450"/>
<dbReference type="FlyBase" id="FBgn0026395">
    <property type="gene designation" value="Or23a"/>
</dbReference>
<dbReference type="VEuPathDB" id="VectorBase:FBgn0026395"/>
<dbReference type="eggNOG" id="ENOG502RTKY">
    <property type="taxonomic scope" value="Eukaryota"/>
</dbReference>
<dbReference type="GeneTree" id="ENSGT00540000073151"/>
<dbReference type="HOGENOM" id="CLU_033399_8_1_1"/>
<dbReference type="InParanoid" id="P81912"/>
<dbReference type="OMA" id="CIRDQNA"/>
<dbReference type="OrthoDB" id="7548151at2759"/>
<dbReference type="PhylomeDB" id="P81912"/>
<dbReference type="BioGRID-ORCS" id="33450">
    <property type="hits" value="0 hits in 1 CRISPR screen"/>
</dbReference>
<dbReference type="GenomeRNAi" id="33450"/>
<dbReference type="PRO" id="PR:P81912"/>
<dbReference type="Proteomes" id="UP000000803">
    <property type="component" value="Chromosome 2L"/>
</dbReference>
<dbReference type="Bgee" id="FBgn0026395">
    <property type="expression patterns" value="Expressed in sensillum trichodeum of antennal segment 3 (Drosophila) and 6 other cell types or tissues"/>
</dbReference>
<dbReference type="GO" id="GO:0030425">
    <property type="term" value="C:dendrite"/>
    <property type="evidence" value="ECO:0000314"/>
    <property type="project" value="FlyBase"/>
</dbReference>
<dbReference type="GO" id="GO:0032590">
    <property type="term" value="C:dendrite membrane"/>
    <property type="evidence" value="ECO:0000250"/>
    <property type="project" value="FlyBase"/>
</dbReference>
<dbReference type="GO" id="GO:0016020">
    <property type="term" value="C:membrane"/>
    <property type="evidence" value="ECO:0000303"/>
    <property type="project" value="UniProtKB"/>
</dbReference>
<dbReference type="GO" id="GO:0043025">
    <property type="term" value="C:neuronal cell body"/>
    <property type="evidence" value="ECO:0000314"/>
    <property type="project" value="FlyBase"/>
</dbReference>
<dbReference type="GO" id="GO:0005886">
    <property type="term" value="C:plasma membrane"/>
    <property type="evidence" value="ECO:0007005"/>
    <property type="project" value="FlyBase"/>
</dbReference>
<dbReference type="GO" id="GO:0170020">
    <property type="term" value="F:ionotropic olfactory receptor activity"/>
    <property type="evidence" value="ECO:0007005"/>
    <property type="project" value="FlyBase"/>
</dbReference>
<dbReference type="GO" id="GO:0005549">
    <property type="term" value="F:odorant binding"/>
    <property type="evidence" value="ECO:0000250"/>
    <property type="project" value="FlyBase"/>
</dbReference>
<dbReference type="GO" id="GO:0004984">
    <property type="term" value="F:olfactory receptor activity"/>
    <property type="evidence" value="ECO:0000318"/>
    <property type="project" value="GO_Central"/>
</dbReference>
<dbReference type="GO" id="GO:0050911">
    <property type="term" value="P:detection of chemical stimulus involved in sensory perception of smell"/>
    <property type="evidence" value="ECO:0007005"/>
    <property type="project" value="FlyBase"/>
</dbReference>
<dbReference type="GO" id="GO:0007608">
    <property type="term" value="P:sensory perception of smell"/>
    <property type="evidence" value="ECO:0000270"/>
    <property type="project" value="FlyBase"/>
</dbReference>
<dbReference type="GO" id="GO:0007165">
    <property type="term" value="P:signal transduction"/>
    <property type="evidence" value="ECO:0007669"/>
    <property type="project" value="UniProtKB-KW"/>
</dbReference>
<dbReference type="InterPro" id="IPR004117">
    <property type="entry name" value="7tm6_olfct_rcpt"/>
</dbReference>
<dbReference type="PANTHER" id="PTHR21137">
    <property type="entry name" value="ODORANT RECEPTOR"/>
    <property type="match status" value="1"/>
</dbReference>
<dbReference type="PANTHER" id="PTHR21137:SF35">
    <property type="entry name" value="ODORANT RECEPTOR 19A-RELATED"/>
    <property type="match status" value="1"/>
</dbReference>
<dbReference type="Pfam" id="PF02949">
    <property type="entry name" value="7tm_6"/>
    <property type="match status" value="1"/>
</dbReference>
<evidence type="ECO:0000250" key="1"/>
<evidence type="ECO:0000255" key="2"/>
<evidence type="ECO:0000269" key="3">
    <source>
    </source>
</evidence>
<evidence type="ECO:0000269" key="4">
    <source>
    </source>
</evidence>
<evidence type="ECO:0000269" key="5">
    <source>
    </source>
</evidence>
<evidence type="ECO:0000269" key="6">
    <source>
    </source>
</evidence>
<evidence type="ECO:0000269" key="7">
    <source>
    </source>
</evidence>
<evidence type="ECO:0000305" key="8"/>